<accession>A8SE66</accession>
<organism>
    <name type="scientific">Ceratophyllum demersum</name>
    <name type="common">Rigid hornwort</name>
    <name type="synonym">Coontail</name>
    <dbReference type="NCBI Taxonomy" id="4428"/>
    <lineage>
        <taxon>Eukaryota</taxon>
        <taxon>Viridiplantae</taxon>
        <taxon>Streptophyta</taxon>
        <taxon>Embryophyta</taxon>
        <taxon>Tracheophyta</taxon>
        <taxon>Spermatophyta</taxon>
        <taxon>Magnoliopsida</taxon>
        <taxon>Ceratophyllales</taxon>
        <taxon>Ceratophyllaceae</taxon>
        <taxon>Ceratophyllum</taxon>
    </lineage>
</organism>
<geneLocation type="chloroplast"/>
<protein>
    <recommendedName>
        <fullName evidence="1">ATP synthase subunit c, chloroplastic</fullName>
    </recommendedName>
    <alternativeName>
        <fullName evidence="1">ATP synthase F(0) sector subunit c</fullName>
    </alternativeName>
    <alternativeName>
        <fullName evidence="1">ATPase subunit III</fullName>
    </alternativeName>
    <alternativeName>
        <fullName evidence="1">F-type ATPase subunit c</fullName>
        <shortName evidence="1">F-ATPase subunit c</shortName>
    </alternativeName>
    <alternativeName>
        <fullName evidence="1">Lipid-binding protein</fullName>
    </alternativeName>
</protein>
<comment type="function">
    <text evidence="1">F(1)F(0) ATP synthase produces ATP from ADP in the presence of a proton or sodium gradient. F-type ATPases consist of two structural domains, F(1) containing the extramembraneous catalytic core and F(0) containing the membrane proton channel, linked together by a central stalk and a peripheral stalk. During catalysis, ATP synthesis in the catalytic domain of F(1) is coupled via a rotary mechanism of the central stalk subunits to proton translocation.</text>
</comment>
<comment type="function">
    <text evidence="1">Key component of the F(0) channel; it plays a direct role in translocation across the membrane. A homomeric c-ring of between 10-14 subunits forms the central stalk rotor element with the F(1) delta and epsilon subunits.</text>
</comment>
<comment type="subunit">
    <text evidence="1">F-type ATPases have 2 components, F(1) - the catalytic core - and F(0) - the membrane proton channel. F(1) has five subunits: alpha(3), beta(3), gamma(1), delta(1), epsilon(1). F(0) has four main subunits: a(1), b(1), b'(1) and c(10-14). The alpha and beta chains form an alternating ring which encloses part of the gamma chain. F(1) is attached to F(0) by a central stalk formed by the gamma and epsilon chains, while a peripheral stalk is formed by the delta, b and b' chains.</text>
</comment>
<comment type="subcellular location">
    <subcellularLocation>
        <location evidence="1">Plastid</location>
        <location evidence="1">Chloroplast thylakoid membrane</location>
        <topology evidence="1">Multi-pass membrane protein</topology>
    </subcellularLocation>
</comment>
<comment type="miscellaneous">
    <text>In plastids the F-type ATPase is also known as CF(1)CF(0).</text>
</comment>
<comment type="similarity">
    <text evidence="1">Belongs to the ATPase C chain family.</text>
</comment>
<feature type="chain" id="PRO_0000362895" description="ATP synthase subunit c, chloroplastic">
    <location>
        <begin position="1"/>
        <end position="81"/>
    </location>
</feature>
<feature type="transmembrane region" description="Helical" evidence="1">
    <location>
        <begin position="3"/>
        <end position="23"/>
    </location>
</feature>
<feature type="transmembrane region" description="Helical" evidence="1">
    <location>
        <begin position="57"/>
        <end position="77"/>
    </location>
</feature>
<feature type="site" description="Reversibly protonated during proton transport" evidence="1">
    <location>
        <position position="61"/>
    </location>
</feature>
<name>ATPH_CERDE</name>
<keyword id="KW-0066">ATP synthesis</keyword>
<keyword id="KW-0138">CF(0)</keyword>
<keyword id="KW-0150">Chloroplast</keyword>
<keyword id="KW-0375">Hydrogen ion transport</keyword>
<keyword id="KW-0406">Ion transport</keyword>
<keyword id="KW-0446">Lipid-binding</keyword>
<keyword id="KW-0472">Membrane</keyword>
<keyword id="KW-0934">Plastid</keyword>
<keyword id="KW-0793">Thylakoid</keyword>
<keyword id="KW-0812">Transmembrane</keyword>
<keyword id="KW-1133">Transmembrane helix</keyword>
<keyword id="KW-0813">Transport</keyword>
<dbReference type="EMBL" id="EF614270">
    <property type="protein sequence ID" value="ABQ81437.1"/>
    <property type="molecule type" value="Genomic_DNA"/>
</dbReference>
<dbReference type="RefSeq" id="YP_001542434.1">
    <property type="nucleotide sequence ID" value="NC_009962.1"/>
</dbReference>
<dbReference type="SMR" id="A8SE66"/>
<dbReference type="GeneID" id="5729391"/>
<dbReference type="GO" id="GO:0009535">
    <property type="term" value="C:chloroplast thylakoid membrane"/>
    <property type="evidence" value="ECO:0007669"/>
    <property type="project" value="UniProtKB-SubCell"/>
</dbReference>
<dbReference type="GO" id="GO:0045259">
    <property type="term" value="C:proton-transporting ATP synthase complex"/>
    <property type="evidence" value="ECO:0007669"/>
    <property type="project" value="UniProtKB-KW"/>
</dbReference>
<dbReference type="GO" id="GO:0033177">
    <property type="term" value="C:proton-transporting two-sector ATPase complex, proton-transporting domain"/>
    <property type="evidence" value="ECO:0007669"/>
    <property type="project" value="InterPro"/>
</dbReference>
<dbReference type="GO" id="GO:0008289">
    <property type="term" value="F:lipid binding"/>
    <property type="evidence" value="ECO:0007669"/>
    <property type="project" value="UniProtKB-KW"/>
</dbReference>
<dbReference type="GO" id="GO:0046933">
    <property type="term" value="F:proton-transporting ATP synthase activity, rotational mechanism"/>
    <property type="evidence" value="ECO:0007669"/>
    <property type="project" value="UniProtKB-UniRule"/>
</dbReference>
<dbReference type="CDD" id="cd18183">
    <property type="entry name" value="ATP-synt_Fo_c_ATPH"/>
    <property type="match status" value="1"/>
</dbReference>
<dbReference type="FunFam" id="1.20.20.10:FF:000001">
    <property type="entry name" value="ATP synthase subunit c, chloroplastic"/>
    <property type="match status" value="1"/>
</dbReference>
<dbReference type="Gene3D" id="1.20.20.10">
    <property type="entry name" value="F1F0 ATP synthase subunit C"/>
    <property type="match status" value="1"/>
</dbReference>
<dbReference type="HAMAP" id="MF_01396">
    <property type="entry name" value="ATP_synth_c_bact"/>
    <property type="match status" value="1"/>
</dbReference>
<dbReference type="InterPro" id="IPR005953">
    <property type="entry name" value="ATP_synth_csu_bac/chlpt"/>
</dbReference>
<dbReference type="InterPro" id="IPR000454">
    <property type="entry name" value="ATP_synth_F0_csu"/>
</dbReference>
<dbReference type="InterPro" id="IPR020537">
    <property type="entry name" value="ATP_synth_F0_csu_DDCD_BS"/>
</dbReference>
<dbReference type="InterPro" id="IPR038662">
    <property type="entry name" value="ATP_synth_F0_csu_sf"/>
</dbReference>
<dbReference type="InterPro" id="IPR002379">
    <property type="entry name" value="ATPase_proteolipid_c-like_dom"/>
</dbReference>
<dbReference type="InterPro" id="IPR035921">
    <property type="entry name" value="F/V-ATP_Csub_sf"/>
</dbReference>
<dbReference type="NCBIfam" id="TIGR01260">
    <property type="entry name" value="ATP_synt_c"/>
    <property type="match status" value="1"/>
</dbReference>
<dbReference type="NCBIfam" id="NF005608">
    <property type="entry name" value="PRK07354.1"/>
    <property type="match status" value="1"/>
</dbReference>
<dbReference type="PANTHER" id="PTHR10031">
    <property type="entry name" value="ATP SYNTHASE LIPID-BINDING PROTEIN, MITOCHONDRIAL"/>
    <property type="match status" value="1"/>
</dbReference>
<dbReference type="PANTHER" id="PTHR10031:SF0">
    <property type="entry name" value="ATPASE PROTEIN 9"/>
    <property type="match status" value="1"/>
</dbReference>
<dbReference type="Pfam" id="PF00137">
    <property type="entry name" value="ATP-synt_C"/>
    <property type="match status" value="1"/>
</dbReference>
<dbReference type="PRINTS" id="PR00124">
    <property type="entry name" value="ATPASEC"/>
</dbReference>
<dbReference type="SUPFAM" id="SSF81333">
    <property type="entry name" value="F1F0 ATP synthase subunit C"/>
    <property type="match status" value="1"/>
</dbReference>
<dbReference type="PROSITE" id="PS00605">
    <property type="entry name" value="ATPASE_C"/>
    <property type="match status" value="1"/>
</dbReference>
<gene>
    <name evidence="1" type="primary">atpH</name>
</gene>
<sequence>MNPLISSASVIAAGLAVGLASIGPGVGQGTAAGQAVEGIARQPEAEGKIRGTLLLSLAFMEALTIYGLVVALALLFANPFV</sequence>
<evidence type="ECO:0000255" key="1">
    <source>
        <dbReference type="HAMAP-Rule" id="MF_01396"/>
    </source>
</evidence>
<proteinExistence type="inferred from homology"/>
<reference key="1">
    <citation type="journal article" date="2007" name="Proc. Natl. Acad. Sci. U.S.A.">
        <title>Using plastid genome-scale data to resolve enigmatic relationships among basal angiosperms.</title>
        <authorList>
            <person name="Moore M.J."/>
            <person name="Bell C.D."/>
            <person name="Soltis P.S."/>
            <person name="Soltis D.E."/>
        </authorList>
    </citation>
    <scope>NUCLEOTIDE SEQUENCE [LARGE SCALE GENOMIC DNA]</scope>
</reference>